<feature type="chain" id="PRO_0000439256" description="AimR transcriptional regulator">
    <location>
        <begin position="1"/>
        <end position="378"/>
    </location>
</feature>
<feature type="helix" evidence="3">
    <location>
        <begin position="1"/>
        <end position="7"/>
    </location>
</feature>
<feature type="helix" evidence="3">
    <location>
        <begin position="10"/>
        <end position="20"/>
    </location>
</feature>
<feature type="helix" evidence="3">
    <location>
        <begin position="25"/>
        <end position="32"/>
    </location>
</feature>
<feature type="helix" evidence="3">
    <location>
        <begin position="36"/>
        <end position="38"/>
    </location>
</feature>
<feature type="helix" evidence="3">
    <location>
        <begin position="43"/>
        <end position="52"/>
    </location>
</feature>
<feature type="helix" evidence="4">
    <location>
        <begin position="54"/>
        <end position="56"/>
    </location>
</feature>
<feature type="helix" evidence="3">
    <location>
        <begin position="57"/>
        <end position="65"/>
    </location>
</feature>
<feature type="helix" evidence="3">
    <location>
        <begin position="73"/>
        <end position="84"/>
    </location>
</feature>
<feature type="helix" evidence="3">
    <location>
        <begin position="88"/>
        <end position="99"/>
    </location>
</feature>
<feature type="helix" evidence="3">
    <location>
        <begin position="104"/>
        <end position="120"/>
    </location>
</feature>
<feature type="helix" evidence="3">
    <location>
        <begin position="126"/>
        <end position="135"/>
    </location>
</feature>
<feature type="helix" evidence="3">
    <location>
        <begin position="141"/>
        <end position="157"/>
    </location>
</feature>
<feature type="helix" evidence="3">
    <location>
        <begin position="161"/>
        <end position="169"/>
    </location>
</feature>
<feature type="helix" evidence="3">
    <location>
        <begin position="173"/>
        <end position="175"/>
    </location>
</feature>
<feature type="helix" evidence="3">
    <location>
        <begin position="180"/>
        <end position="199"/>
    </location>
</feature>
<feature type="helix" evidence="3">
    <location>
        <begin position="203"/>
        <end position="216"/>
    </location>
</feature>
<feature type="helix" evidence="3">
    <location>
        <begin position="220"/>
        <end position="233"/>
    </location>
</feature>
<feature type="turn" evidence="3">
    <location>
        <begin position="234"/>
        <end position="237"/>
    </location>
</feature>
<feature type="helix" evidence="3">
    <location>
        <begin position="239"/>
        <end position="248"/>
    </location>
</feature>
<feature type="helix" evidence="3">
    <location>
        <begin position="249"/>
        <end position="252"/>
    </location>
</feature>
<feature type="helix" evidence="3">
    <location>
        <begin position="256"/>
        <end position="273"/>
    </location>
</feature>
<feature type="helix" evidence="3">
    <location>
        <begin position="287"/>
        <end position="300"/>
    </location>
</feature>
<feature type="helix" evidence="3">
    <location>
        <begin position="303"/>
        <end position="314"/>
    </location>
</feature>
<feature type="helix" evidence="3">
    <location>
        <begin position="320"/>
        <end position="334"/>
    </location>
</feature>
<feature type="helix" evidence="3">
    <location>
        <begin position="337"/>
        <end position="349"/>
    </location>
</feature>
<feature type="helix" evidence="3">
    <location>
        <begin position="357"/>
        <end position="365"/>
    </location>
</feature>
<feature type="helix" evidence="3">
    <location>
        <begin position="370"/>
        <end position="376"/>
    </location>
</feature>
<sequence length="378" mass="44107">MIKNECEKDNQLAARLAKLAGYEKVNGFYKFVNTPEKEMENLGGLLKIVKNLFPDSEEQLLSEYFLELDPNKKCARQSVEYSDINQWDTLTDKIIINLCNSKNSTSQEWGKVYSLHRKLNKNEISLNDAIRESGKCKIKSAEMLFFSNAMLMYAYLNIGEFGLMKSTSKLLEFDDLPEGFIKESFKSRVSMLEANISLNENSLLEARQHSNRAIENSNVNRICFFAYLTIGNTLIFEDYDEAKKAYIKGQKYAKNPVHQEMLDGALCFLSNIWKKENQWVNYNSDNIKYLQLRAFYYINQGNIEEATEILDELSSRDQDENELGFYYYYKGLISQDKTDYYKSIRYFKKSDDKYFIQLPLLQLERMGADLELLNLISI</sequence>
<protein>
    <recommendedName>
        <fullName evidence="2">AimR transcriptional regulator</fullName>
    </recommendedName>
    <alternativeName>
        <fullName evidence="2">Arbitrium communication peptide receptor</fullName>
    </alternativeName>
</protein>
<proteinExistence type="evidence at protein level"/>
<organism>
    <name type="scientific">Bacillus phage phi3T</name>
    <name type="common">Bacteriophage phi-3T</name>
    <dbReference type="NCBI Taxonomy" id="10736"/>
    <lineage>
        <taxon>Viruses</taxon>
        <taxon>Duplodnaviria</taxon>
        <taxon>Heunggongvirae</taxon>
        <taxon>Uroviricota</taxon>
        <taxon>Caudoviricetes</taxon>
        <taxon>Spbetavirus</taxon>
    </lineage>
</organism>
<dbReference type="EMBL" id="KY030782">
    <property type="protein sequence ID" value="APD21232.1"/>
    <property type="molecule type" value="Genomic_DNA"/>
</dbReference>
<dbReference type="PDB" id="5ZVV">
    <property type="method" value="X-ray"/>
    <property type="resolution" value="2.20 A"/>
    <property type="chains" value="A/B=1-378"/>
</dbReference>
<dbReference type="PDB" id="5ZVW">
    <property type="method" value="X-ray"/>
    <property type="resolution" value="2.29 A"/>
    <property type="chains" value="A=1-378"/>
</dbReference>
<dbReference type="PDBsum" id="5ZVV"/>
<dbReference type="PDBsum" id="5ZVW"/>
<dbReference type="SMR" id="P0DOE3"/>
<dbReference type="Proteomes" id="UP000188400">
    <property type="component" value="Genome"/>
</dbReference>
<dbReference type="GO" id="GO:0098689">
    <property type="term" value="P:latency-replication decision"/>
    <property type="evidence" value="ECO:0000314"/>
    <property type="project" value="UniProtKB"/>
</dbReference>
<dbReference type="Gene3D" id="1.25.40.10">
    <property type="entry name" value="Tetratricopeptide repeat domain"/>
    <property type="match status" value="1"/>
</dbReference>
<dbReference type="InterPro" id="IPR047705">
    <property type="entry name" value="AimR-like"/>
</dbReference>
<dbReference type="InterPro" id="IPR011990">
    <property type="entry name" value="TPR-like_helical_dom_sf"/>
</dbReference>
<dbReference type="NCBIfam" id="NF038310">
    <property type="entry name" value="lysogeny_AimR"/>
    <property type="match status" value="1"/>
</dbReference>
<dbReference type="Pfam" id="PF22871">
    <property type="entry name" value="AimR"/>
    <property type="match status" value="1"/>
</dbReference>
<dbReference type="SUPFAM" id="SSF48452">
    <property type="entry name" value="TPR-like"/>
    <property type="match status" value="1"/>
</dbReference>
<comment type="function">
    <text evidence="1">Transcriptional regulator which is part of the latency-replication switch system that decides at the onset of infection whether to replicate and lyse the host or to lysogenize (latency) and keep the host viable. Activates the transcription of the aimX locus. Transcriptional activation of aimX seems to lead to the productive viral replication (lytic cycle), aimX possibly acting as a regulatory non-coding RNA.</text>
</comment>
<comment type="subunit">
    <text evidence="1">Homodimer. Interacts with the viral arbitrium peptide, this interaction changes the oligomeric state of AimR from an active dimer to an inactive monomer leading to lysogeny.</text>
</comment>
<comment type="disruption phenotype">
    <text evidence="1">Knockdown results in decreased AimX transcription and increased lysogeny.</text>
</comment>
<comment type="online information" name="Protein Spotlight">
    <link uri="https://www.proteinspotlight.org/back_issues/190/"/>
    <text>Between you and me - Issue 190 of April 2017</text>
</comment>
<name>AIMR_BPPHT</name>
<gene>
    <name type="primary">aimR</name>
    <name type="ordered locus">phi3T_89</name>
</gene>
<keyword id="KW-0002">3D-structure</keyword>
<keyword id="KW-0010">Activator</keyword>
<keyword id="KW-1252">Latency-replication decision</keyword>
<keyword id="KW-0804">Transcription</keyword>
<keyword id="KW-0805">Transcription regulation</keyword>
<accession>P0DOE3</accession>
<evidence type="ECO:0000269" key="1">
    <source>
    </source>
</evidence>
<evidence type="ECO:0000303" key="2">
    <source>
    </source>
</evidence>
<evidence type="ECO:0007829" key="3">
    <source>
        <dbReference type="PDB" id="5ZVV"/>
    </source>
</evidence>
<evidence type="ECO:0007829" key="4">
    <source>
        <dbReference type="PDB" id="5ZVW"/>
    </source>
</evidence>
<organismHost>
    <name type="scientific">Bacillus subtilis</name>
    <dbReference type="NCBI Taxonomy" id="1423"/>
</organismHost>
<reference key="1">
    <citation type="journal article" date="2017" name="Nature">
        <title>Communication between viruses guides lysis-lysogeny decisions.</title>
        <authorList>
            <person name="Erez Z."/>
            <person name="Steinberger-Levy I."/>
            <person name="Shamir M."/>
            <person name="Doron S."/>
            <person name="Stokar-Avihail A."/>
            <person name="Peleg Y."/>
            <person name="Melamed S."/>
            <person name="Leavitt A."/>
            <person name="Savidor A."/>
            <person name="Albeck S."/>
            <person name="Amitai G."/>
            <person name="Sorek R."/>
        </authorList>
    </citation>
    <scope>NUCLEOTIDE SEQUENCE [GENOMIC DNA]</scope>
    <scope>FUNCTION</scope>
    <scope>SUBUNIT</scope>
    <scope>DISRUPTION PHENOTYPE</scope>
</reference>